<name>PURQ_LACCB</name>
<organism>
    <name type="scientific">Lacticaseibacillus casei (strain BL23)</name>
    <name type="common">Lactobacillus casei</name>
    <dbReference type="NCBI Taxonomy" id="543734"/>
    <lineage>
        <taxon>Bacteria</taxon>
        <taxon>Bacillati</taxon>
        <taxon>Bacillota</taxon>
        <taxon>Bacilli</taxon>
        <taxon>Lactobacillales</taxon>
        <taxon>Lactobacillaceae</taxon>
        <taxon>Lacticaseibacillus</taxon>
    </lineage>
</organism>
<proteinExistence type="inferred from homology"/>
<feature type="chain" id="PRO_1000124121" description="Phosphoribosylformylglycinamidine synthase subunit PurQ">
    <location>
        <begin position="1"/>
        <end position="228"/>
    </location>
</feature>
<feature type="domain" description="Glutamine amidotransferase type-1" evidence="1">
    <location>
        <begin position="2"/>
        <end position="225"/>
    </location>
</feature>
<feature type="active site" description="Nucleophile" evidence="1">
    <location>
        <position position="86"/>
    </location>
</feature>
<feature type="active site" evidence="1">
    <location>
        <position position="194"/>
    </location>
</feature>
<feature type="active site" evidence="1">
    <location>
        <position position="196"/>
    </location>
</feature>
<sequence length="228" mass="24192">MKAAVISFPGSNCDLDLQWAVRDIAGAECDLIKPTQTDLTAYDVVMVPGGFSYGDYLRSGAIARFSPVMDALKQFAAAGGYVIGICNGFQILTEAGFLPGALQWNRDLNFICEPVALTVENAGTAFSNQYQVGDHLTLPIAHGEGNYYADPETLAALETNGQVVFRYANNPNGSMHDIAGVTNETGNVLGMMPHPERAVEALLGGTDGLGVFQSLINQTEGADVRGAR</sequence>
<keyword id="KW-0067">ATP-binding</keyword>
<keyword id="KW-0963">Cytoplasm</keyword>
<keyword id="KW-0315">Glutamine amidotransferase</keyword>
<keyword id="KW-0378">Hydrolase</keyword>
<keyword id="KW-0436">Ligase</keyword>
<keyword id="KW-0547">Nucleotide-binding</keyword>
<keyword id="KW-0658">Purine biosynthesis</keyword>
<dbReference type="EC" id="6.3.5.3" evidence="1"/>
<dbReference type="EC" id="3.5.1.2" evidence="1"/>
<dbReference type="EMBL" id="FM177140">
    <property type="protein sequence ID" value="CAQ67049.1"/>
    <property type="molecule type" value="Genomic_DNA"/>
</dbReference>
<dbReference type="SMR" id="B3WF98"/>
<dbReference type="KEGG" id="lcb:LCABL_19710"/>
<dbReference type="HOGENOM" id="CLU_001031_3_1_9"/>
<dbReference type="UniPathway" id="UPA00074">
    <property type="reaction ID" value="UER00128"/>
</dbReference>
<dbReference type="GO" id="GO:0005737">
    <property type="term" value="C:cytoplasm"/>
    <property type="evidence" value="ECO:0007669"/>
    <property type="project" value="UniProtKB-SubCell"/>
</dbReference>
<dbReference type="GO" id="GO:0005524">
    <property type="term" value="F:ATP binding"/>
    <property type="evidence" value="ECO:0007669"/>
    <property type="project" value="UniProtKB-KW"/>
</dbReference>
<dbReference type="GO" id="GO:0004359">
    <property type="term" value="F:glutaminase activity"/>
    <property type="evidence" value="ECO:0007669"/>
    <property type="project" value="UniProtKB-EC"/>
</dbReference>
<dbReference type="GO" id="GO:0004642">
    <property type="term" value="F:phosphoribosylformylglycinamidine synthase activity"/>
    <property type="evidence" value="ECO:0007669"/>
    <property type="project" value="UniProtKB-UniRule"/>
</dbReference>
<dbReference type="GO" id="GO:0006189">
    <property type="term" value="P:'de novo' IMP biosynthetic process"/>
    <property type="evidence" value="ECO:0007669"/>
    <property type="project" value="UniProtKB-UniRule"/>
</dbReference>
<dbReference type="CDD" id="cd01740">
    <property type="entry name" value="GATase1_FGAR_AT"/>
    <property type="match status" value="1"/>
</dbReference>
<dbReference type="Gene3D" id="3.40.50.880">
    <property type="match status" value="1"/>
</dbReference>
<dbReference type="HAMAP" id="MF_00421">
    <property type="entry name" value="PurQ"/>
    <property type="match status" value="1"/>
</dbReference>
<dbReference type="InterPro" id="IPR029062">
    <property type="entry name" value="Class_I_gatase-like"/>
</dbReference>
<dbReference type="InterPro" id="IPR010075">
    <property type="entry name" value="PRibForGlyAmidine_synth_PurQ"/>
</dbReference>
<dbReference type="NCBIfam" id="TIGR01737">
    <property type="entry name" value="FGAM_synth_I"/>
    <property type="match status" value="1"/>
</dbReference>
<dbReference type="NCBIfam" id="NF002957">
    <property type="entry name" value="PRK03619.1"/>
    <property type="match status" value="1"/>
</dbReference>
<dbReference type="PANTHER" id="PTHR47552">
    <property type="entry name" value="PHOSPHORIBOSYLFORMYLGLYCINAMIDINE SYNTHASE SUBUNIT PURQ"/>
    <property type="match status" value="1"/>
</dbReference>
<dbReference type="PANTHER" id="PTHR47552:SF1">
    <property type="entry name" value="PHOSPHORIBOSYLFORMYLGLYCINAMIDINE SYNTHASE SUBUNIT PURQ"/>
    <property type="match status" value="1"/>
</dbReference>
<dbReference type="Pfam" id="PF13507">
    <property type="entry name" value="GATase_5"/>
    <property type="match status" value="1"/>
</dbReference>
<dbReference type="PIRSF" id="PIRSF001586">
    <property type="entry name" value="FGAM_synth_I"/>
    <property type="match status" value="1"/>
</dbReference>
<dbReference type="SMART" id="SM01211">
    <property type="entry name" value="GATase_5"/>
    <property type="match status" value="1"/>
</dbReference>
<dbReference type="SUPFAM" id="SSF52317">
    <property type="entry name" value="Class I glutamine amidotransferase-like"/>
    <property type="match status" value="1"/>
</dbReference>
<dbReference type="PROSITE" id="PS51273">
    <property type="entry name" value="GATASE_TYPE_1"/>
    <property type="match status" value="1"/>
</dbReference>
<gene>
    <name evidence="1" type="primary">purQ</name>
    <name type="ordered locus">LCABL_19710</name>
</gene>
<accession>B3WF98</accession>
<comment type="function">
    <text evidence="1">Part of the phosphoribosylformylglycinamidine synthase complex involved in the purines biosynthetic pathway. Catalyzes the ATP-dependent conversion of formylglycinamide ribonucleotide (FGAR) and glutamine to yield formylglycinamidine ribonucleotide (FGAM) and glutamate. The FGAM synthase complex is composed of three subunits. PurQ produces an ammonia molecule by converting glutamine to glutamate. PurL transfers the ammonia molecule to FGAR to form FGAM in an ATP-dependent manner. PurS interacts with PurQ and PurL and is thought to assist in the transfer of the ammonia molecule from PurQ to PurL.</text>
</comment>
<comment type="catalytic activity">
    <reaction evidence="1">
        <text>N(2)-formyl-N(1)-(5-phospho-beta-D-ribosyl)glycinamide + L-glutamine + ATP + H2O = 2-formamido-N(1)-(5-O-phospho-beta-D-ribosyl)acetamidine + L-glutamate + ADP + phosphate + H(+)</text>
        <dbReference type="Rhea" id="RHEA:17129"/>
        <dbReference type="ChEBI" id="CHEBI:15377"/>
        <dbReference type="ChEBI" id="CHEBI:15378"/>
        <dbReference type="ChEBI" id="CHEBI:29985"/>
        <dbReference type="ChEBI" id="CHEBI:30616"/>
        <dbReference type="ChEBI" id="CHEBI:43474"/>
        <dbReference type="ChEBI" id="CHEBI:58359"/>
        <dbReference type="ChEBI" id="CHEBI:147286"/>
        <dbReference type="ChEBI" id="CHEBI:147287"/>
        <dbReference type="ChEBI" id="CHEBI:456216"/>
        <dbReference type="EC" id="6.3.5.3"/>
    </reaction>
</comment>
<comment type="catalytic activity">
    <reaction evidence="1">
        <text>L-glutamine + H2O = L-glutamate + NH4(+)</text>
        <dbReference type="Rhea" id="RHEA:15889"/>
        <dbReference type="ChEBI" id="CHEBI:15377"/>
        <dbReference type="ChEBI" id="CHEBI:28938"/>
        <dbReference type="ChEBI" id="CHEBI:29985"/>
        <dbReference type="ChEBI" id="CHEBI:58359"/>
        <dbReference type="EC" id="3.5.1.2"/>
    </reaction>
</comment>
<comment type="pathway">
    <text evidence="1">Purine metabolism; IMP biosynthesis via de novo pathway; 5-amino-1-(5-phospho-D-ribosyl)imidazole from N(2)-formyl-N(1)-(5-phospho-D-ribosyl)glycinamide: step 1/2.</text>
</comment>
<comment type="subunit">
    <text evidence="1">Part of the FGAM synthase complex composed of 1 PurL, 1 PurQ and 2 PurS subunits.</text>
</comment>
<comment type="subcellular location">
    <subcellularLocation>
        <location evidence="1">Cytoplasm</location>
    </subcellularLocation>
</comment>
<evidence type="ECO:0000255" key="1">
    <source>
        <dbReference type="HAMAP-Rule" id="MF_00421"/>
    </source>
</evidence>
<protein>
    <recommendedName>
        <fullName evidence="1">Phosphoribosylformylglycinamidine synthase subunit PurQ</fullName>
        <shortName evidence="1">FGAM synthase</shortName>
        <ecNumber evidence="1">6.3.5.3</ecNumber>
    </recommendedName>
    <alternativeName>
        <fullName evidence="1">Formylglycinamide ribonucleotide amidotransferase subunit I</fullName>
        <shortName evidence="1">FGAR amidotransferase I</shortName>
        <shortName evidence="1">FGAR-AT I</shortName>
    </alternativeName>
    <alternativeName>
        <fullName evidence="1">Glutaminase PurQ</fullName>
        <ecNumber evidence="1">3.5.1.2</ecNumber>
    </alternativeName>
    <alternativeName>
        <fullName evidence="1">Phosphoribosylformylglycinamidine synthase subunit I</fullName>
    </alternativeName>
</protein>
<reference key="1">
    <citation type="submission" date="2008-06" db="EMBL/GenBank/DDBJ databases">
        <title>Lactobacillus casei BL23 complete genome sequence.</title>
        <authorList>
            <person name="Maze A."/>
            <person name="Boel G."/>
            <person name="Bourand A."/>
            <person name="Loux V."/>
            <person name="Gibrat J.F."/>
            <person name="Zuniga M."/>
            <person name="Hartke A."/>
            <person name="Deutscher J."/>
        </authorList>
    </citation>
    <scope>NUCLEOTIDE SEQUENCE [LARGE SCALE GENOMIC DNA]</scope>
    <source>
        <strain>BL23</strain>
    </source>
</reference>